<accession>C0KYC6</accession>
<sequence length="62" mass="7089">MRCLPVFVILLLLIASAPSVDAQLKTKDDVPLASFHDNAKGTQHKRIINWCCLIFYQCCLRR</sequence>
<protein>
    <recommendedName>
        <fullName evidence="3">Conotoxin Sr5.7</fullName>
    </recommendedName>
</protein>
<keyword id="KW-0165">Cleavage on pair of basic residues</keyword>
<keyword id="KW-1015">Disulfide bond</keyword>
<keyword id="KW-0964">Secreted</keyword>
<keyword id="KW-0732">Signal</keyword>
<keyword id="KW-0800">Toxin</keyword>
<name>CT57_CONSP</name>
<dbReference type="EMBL" id="FJ646608">
    <property type="protein sequence ID" value="ACN22846.1"/>
    <property type="molecule type" value="mRNA"/>
</dbReference>
<dbReference type="ConoServer" id="3781">
    <property type="toxin name" value="Sr5.7 precursor"/>
</dbReference>
<dbReference type="GO" id="GO:0005576">
    <property type="term" value="C:extracellular region"/>
    <property type="evidence" value="ECO:0007669"/>
    <property type="project" value="UniProtKB-SubCell"/>
</dbReference>
<dbReference type="GO" id="GO:0090729">
    <property type="term" value="F:toxin activity"/>
    <property type="evidence" value="ECO:0007669"/>
    <property type="project" value="UniProtKB-KW"/>
</dbReference>
<dbReference type="InterPro" id="IPR031565">
    <property type="entry name" value="T-conotoxin"/>
</dbReference>
<dbReference type="Pfam" id="PF16981">
    <property type="entry name" value="Chi-conotoxin"/>
    <property type="match status" value="1"/>
</dbReference>
<evidence type="ECO:0000250" key="1"/>
<evidence type="ECO:0000255" key="2"/>
<evidence type="ECO:0000303" key="3">
    <source>
    </source>
</evidence>
<evidence type="ECO:0000305" key="4"/>
<evidence type="ECO:0000305" key="5">
    <source>
    </source>
</evidence>
<comment type="subcellular location">
    <subcellularLocation>
        <location evidence="5">Secreted</location>
    </subcellularLocation>
</comment>
<comment type="tissue specificity">
    <text evidence="5">Expressed by the venom duct.</text>
</comment>
<comment type="domain">
    <text evidence="4">The cysteine framework is V (CC-CC).</text>
</comment>
<comment type="PTM">
    <text evidence="4">Contains 2 disulfide bonds that can be either 'C1-C3, C2-C4' or 'C1-C4, C2-C3', since these disulfide connectivities have been observed for conotoxins with cysteine framework V (for examples, see AC P0DQQ7 and AC P81755).</text>
</comment>
<comment type="similarity">
    <text evidence="4">Belongs to the conotoxin T superfamily.</text>
</comment>
<feature type="signal peptide" evidence="2">
    <location>
        <begin position="1"/>
        <end position="22"/>
    </location>
</feature>
<feature type="propeptide" id="PRO_0000392721" evidence="1">
    <location>
        <begin position="23"/>
        <end position="44"/>
    </location>
</feature>
<feature type="peptide" id="PRO_0000392722" description="Conotoxin Sr5.7">
    <location>
        <begin position="47"/>
        <end position="60"/>
    </location>
</feature>
<reference key="1">
    <citation type="journal article" date="2009" name="Peptides">
        <title>Identification, by RT-PCR, of four novel T-1-superfamily conotoxins from the vermivorous snail Conus spurius from the Gulf of Mexico.</title>
        <authorList>
            <person name="Zamora-Bustillos R."/>
            <person name="Aguilar M.B."/>
            <person name="Falcon A."/>
            <person name="Heimer de la Cotera E.P."/>
        </authorList>
    </citation>
    <scope>NUCLEOTIDE SEQUENCE [MRNA]</scope>
    <source>
        <tissue>Venom duct</tissue>
    </source>
</reference>
<organism>
    <name type="scientific">Conus spurius</name>
    <name type="common">Alphabet cone</name>
    <dbReference type="NCBI Taxonomy" id="192919"/>
    <lineage>
        <taxon>Eukaryota</taxon>
        <taxon>Metazoa</taxon>
        <taxon>Spiralia</taxon>
        <taxon>Lophotrochozoa</taxon>
        <taxon>Mollusca</taxon>
        <taxon>Gastropoda</taxon>
        <taxon>Caenogastropoda</taxon>
        <taxon>Neogastropoda</taxon>
        <taxon>Conoidea</taxon>
        <taxon>Conidae</taxon>
        <taxon>Conus</taxon>
        <taxon>Lindaconus</taxon>
    </lineage>
</organism>
<proteinExistence type="inferred from homology"/>